<organism>
    <name type="scientific">Columba livia</name>
    <name type="common">Rock dove</name>
    <dbReference type="NCBI Taxonomy" id="8932"/>
    <lineage>
        <taxon>Eukaryota</taxon>
        <taxon>Metazoa</taxon>
        <taxon>Chordata</taxon>
        <taxon>Craniata</taxon>
        <taxon>Vertebrata</taxon>
        <taxon>Euteleostomi</taxon>
        <taxon>Archelosauria</taxon>
        <taxon>Archosauria</taxon>
        <taxon>Dinosauria</taxon>
        <taxon>Saurischia</taxon>
        <taxon>Theropoda</taxon>
        <taxon>Coelurosauria</taxon>
        <taxon>Aves</taxon>
        <taxon>Neognathae</taxon>
        <taxon>Neoaves</taxon>
        <taxon>Columbimorphae</taxon>
        <taxon>Columbiformes</taxon>
        <taxon>Columbidae</taxon>
        <taxon>Columba</taxon>
    </lineage>
</organism>
<name>KRF4_COLLI</name>
<comment type="subunit">
    <text>The avian keratins (F-ker, S-ker, C-ker and B-ker) are a complex mixture of very similar polypeptides.</text>
</comment>
<comment type="similarity">
    <text evidence="2">Belongs to the avian keratin family.</text>
</comment>
<evidence type="ECO:0000250" key="1"/>
<evidence type="ECO:0000305" key="2"/>
<protein>
    <recommendedName>
        <fullName>Feather keratin Cos2-3</fullName>
        <shortName>F-ker</shortName>
    </recommendedName>
</protein>
<accession>Q9PSV3</accession>
<feature type="initiator methionine" description="Removed" evidence="1">
    <location>
        <position position="1"/>
    </location>
</feature>
<feature type="chain" id="PRO_0000097005" description="Feather keratin Cos2-3">
    <location>
        <begin position="2"/>
        <end position="101"/>
    </location>
</feature>
<feature type="modified residue" description="N-acetylserine" evidence="1">
    <location>
        <position position="2"/>
    </location>
</feature>
<reference key="1">
    <citation type="journal article" date="2003" name="DNA Seq.">
        <title>Nucleotide sequences of pigeon feather keratin genes.</title>
        <authorList>
            <person name="Takahashi R."/>
            <person name="Akahane K."/>
            <person name="Arai K."/>
        </authorList>
    </citation>
    <scope>NUCLEOTIDE SEQUENCE [GENOMIC DNA]</scope>
</reference>
<sequence>MSCYNPCLPCQPCGPTPLANSCNEPCVRQCQSSNVVIEPSSVVVILPGPILSSFPQNTVVGSSTSAAVGSILSCEGVPINSGCFDLSCITSRYCGSRCQPC</sequence>
<dbReference type="EMBL" id="AB017906">
    <property type="protein sequence ID" value="BAA33472.1"/>
    <property type="molecule type" value="Genomic_DNA"/>
</dbReference>
<dbReference type="RefSeq" id="XP_005504212.1">
    <property type="nucleotide sequence ID" value="XM_005504155.2"/>
</dbReference>
<dbReference type="KEGG" id="clv:102097818"/>
<dbReference type="GO" id="GO:0005882">
    <property type="term" value="C:intermediate filament"/>
    <property type="evidence" value="ECO:0007669"/>
    <property type="project" value="UniProtKB-KW"/>
</dbReference>
<dbReference type="GO" id="GO:0005200">
    <property type="term" value="F:structural constituent of cytoskeleton"/>
    <property type="evidence" value="ECO:0007669"/>
    <property type="project" value="InterPro"/>
</dbReference>
<dbReference type="InterPro" id="IPR003461">
    <property type="entry name" value="Keratin"/>
</dbReference>
<dbReference type="PANTHER" id="PTHR31203">
    <property type="entry name" value="BETA-KERATIN-RELATED PROTEIN-RELATED"/>
    <property type="match status" value="1"/>
</dbReference>
<dbReference type="PANTHER" id="PTHR31203:SF1">
    <property type="entry name" value="BETA-KERATIN-RELATED PROTEIN-RELATED"/>
    <property type="match status" value="1"/>
</dbReference>
<dbReference type="Pfam" id="PF02422">
    <property type="entry name" value="Keratin"/>
    <property type="match status" value="1"/>
</dbReference>
<proteinExistence type="inferred from homology"/>
<keyword id="KW-0007">Acetylation</keyword>
<keyword id="KW-0416">Keratin</keyword>